<proteinExistence type="inferred from homology"/>
<feature type="chain" id="PRO_0000324858" description="Fe-S cluster assembly protein dre2">
    <location>
        <begin position="1"/>
        <end position="307"/>
    </location>
</feature>
<feature type="region of interest" description="Disordered" evidence="2">
    <location>
        <begin position="1"/>
        <end position="26"/>
    </location>
</feature>
<feature type="region of interest" description="N-terminal SAM-like domain" evidence="1">
    <location>
        <begin position="23"/>
        <end position="152"/>
    </location>
</feature>
<feature type="region of interest" description="Linker" evidence="1">
    <location>
        <begin position="153"/>
        <end position="197"/>
    </location>
</feature>
<feature type="region of interest" description="Disordered" evidence="2">
    <location>
        <begin position="159"/>
        <end position="179"/>
    </location>
</feature>
<feature type="region of interest" description="Fe-S binding site A" evidence="1">
    <location>
        <begin position="207"/>
        <end position="224"/>
    </location>
</feature>
<feature type="region of interest" description="Fe-S binding site B" evidence="1">
    <location>
        <begin position="270"/>
        <end position="284"/>
    </location>
</feature>
<feature type="short sequence motif" description="Cx2C motif 1" evidence="1">
    <location>
        <begin position="270"/>
        <end position="273"/>
    </location>
</feature>
<feature type="short sequence motif" description="Cx2C motif 2" evidence="1">
    <location>
        <begin position="281"/>
        <end position="284"/>
    </location>
</feature>
<feature type="compositionally biased region" description="Low complexity" evidence="2">
    <location>
        <begin position="15"/>
        <end position="26"/>
    </location>
</feature>
<feature type="binding site" evidence="1">
    <location>
        <position position="207"/>
    </location>
    <ligand>
        <name>[2Fe-2S] cluster</name>
        <dbReference type="ChEBI" id="CHEBI:190135"/>
    </ligand>
</feature>
<feature type="binding site" evidence="1">
    <location>
        <position position="219"/>
    </location>
    <ligand>
        <name>[2Fe-2S] cluster</name>
        <dbReference type="ChEBI" id="CHEBI:190135"/>
    </ligand>
</feature>
<feature type="binding site" evidence="1">
    <location>
        <position position="222"/>
    </location>
    <ligand>
        <name>[2Fe-2S] cluster</name>
        <dbReference type="ChEBI" id="CHEBI:190135"/>
    </ligand>
</feature>
<feature type="binding site" evidence="1">
    <location>
        <position position="224"/>
    </location>
    <ligand>
        <name>[2Fe-2S] cluster</name>
        <dbReference type="ChEBI" id="CHEBI:190135"/>
    </ligand>
</feature>
<feature type="binding site" evidence="1">
    <location>
        <position position="270"/>
    </location>
    <ligand>
        <name>[4Fe-4S] cluster</name>
        <dbReference type="ChEBI" id="CHEBI:49883"/>
    </ligand>
</feature>
<feature type="binding site" evidence="1">
    <location>
        <position position="273"/>
    </location>
    <ligand>
        <name>[4Fe-4S] cluster</name>
        <dbReference type="ChEBI" id="CHEBI:49883"/>
    </ligand>
</feature>
<feature type="binding site" evidence="1">
    <location>
        <position position="281"/>
    </location>
    <ligand>
        <name>[4Fe-4S] cluster</name>
        <dbReference type="ChEBI" id="CHEBI:49883"/>
    </ligand>
</feature>
<feature type="binding site" evidence="1">
    <location>
        <position position="284"/>
    </location>
    <ligand>
        <name>[4Fe-4S] cluster</name>
        <dbReference type="ChEBI" id="CHEBI:49883"/>
    </ligand>
</feature>
<comment type="function">
    <text evidence="1">Component of the cytosolic iron-sulfur (Fe-S) protein assembly (CIA) machinery required for the maturation of extramitochondrial Fe-S proteins. Part of an electron transfer chain functioning in an early step of cytosolic Fe-S biogenesis, facilitating the de novo assembly of a [4Fe-4S] cluster on the scaffold complex cfd1-nbp35. Electrons are transferred to dre2 from NADPH via the FAD- and FMN-containing protein tah18. Tah18-dre2 are also required for the assembly of the diferric tyrosyl radical cofactor of ribonucleotide reductase (RNR), probably by providing electrons for reduction during radical cofactor maturation in the catalytic small subunit rnr2.</text>
</comment>
<comment type="cofactor">
    <cofactor evidence="1">
        <name>[2Fe-2S] cluster</name>
        <dbReference type="ChEBI" id="CHEBI:190135"/>
    </cofactor>
</comment>
<comment type="cofactor">
    <cofactor evidence="1">
        <name>[4Fe-4S] cluster</name>
        <dbReference type="ChEBI" id="CHEBI:49883"/>
    </cofactor>
</comment>
<comment type="subunit">
    <text evidence="1">Monomer. Interacts with tah18. Interacts with mia40.</text>
</comment>
<comment type="subcellular location">
    <subcellularLocation>
        <location evidence="1">Cytoplasm</location>
    </subcellularLocation>
    <subcellularLocation>
        <location evidence="1">Mitochondrion intermembrane space</location>
    </subcellularLocation>
</comment>
<comment type="domain">
    <text evidence="1">The C-terminal domain binds 2 Fe-S clusters but is otherwise mostly in an intrinsically disordered conformation.</text>
</comment>
<comment type="domain">
    <text evidence="1">The N-terminal domain has structural similarity with S-adenosyl-L-methionine-dependent methyltransferases, but does not bind S-adenosyl-L-methionine. It is required for correct assembly of the 2 Fe-S clusters.</text>
</comment>
<comment type="domain">
    <text evidence="1">The twin Cx2C motifs are involved in the recognition by the mitochondrial mia40-erv1 disulfide relay system. The formation of 2 disulfide bonds in the Cx2C motifs through dithiol/disulfide exchange reactions effectively traps the protein in the mitochondrial intermembrane space.</text>
</comment>
<comment type="similarity">
    <text evidence="1">Belongs to the anamorsin family.</text>
</comment>
<keyword id="KW-0001">2Fe-2S</keyword>
<keyword id="KW-0004">4Fe-4S</keyword>
<keyword id="KW-0963">Cytoplasm</keyword>
<keyword id="KW-0408">Iron</keyword>
<keyword id="KW-0411">Iron-sulfur</keyword>
<keyword id="KW-0479">Metal-binding</keyword>
<keyword id="KW-0496">Mitochondrion</keyword>
<keyword id="KW-1185">Reference proteome</keyword>
<name>DRE2_ASPTN</name>
<gene>
    <name evidence="1" type="primary">dre2</name>
    <name type="ORF">ATEG_10310</name>
</gene>
<organism>
    <name type="scientific">Aspergillus terreus (strain NIH 2624 / FGSC A1156)</name>
    <dbReference type="NCBI Taxonomy" id="341663"/>
    <lineage>
        <taxon>Eukaryota</taxon>
        <taxon>Fungi</taxon>
        <taxon>Dikarya</taxon>
        <taxon>Ascomycota</taxon>
        <taxon>Pezizomycotina</taxon>
        <taxon>Eurotiomycetes</taxon>
        <taxon>Eurotiomycetidae</taxon>
        <taxon>Eurotiales</taxon>
        <taxon>Aspergillaceae</taxon>
        <taxon>Aspergillus</taxon>
        <taxon>Aspergillus subgen. Circumdati</taxon>
    </lineage>
</organism>
<evidence type="ECO:0000255" key="1">
    <source>
        <dbReference type="HAMAP-Rule" id="MF_03115"/>
    </source>
</evidence>
<evidence type="ECO:0000256" key="2">
    <source>
        <dbReference type="SAM" id="MobiDB-lite"/>
    </source>
</evidence>
<sequence>MTPVPVSVDTTADFAAPPTKTAPSTSTRTLLLAPPSIAAHEEKLRDIFATFDRASTDLQMLDRLSAGFVSLPAATYDLVLVLTDTDSARRAEALQLLSRDVYSALVPSMKGGAKLQLQDGTWNSAEGLEAILAGLVEKDGAFEKPAYQEAAVPLRLGGKKKKAPAPTEQPPVATGVGFVDGNDELIDEDDLLSDDDLKRPMQQPANCQPEKAKKRRRPCKDCTCGLAAEMEAEDKARQEKADKDLNVLKLQSTDLSDEVDFTVQGKTSSCNSCSLGDAFRCSSCPYIGLPPFKPGEEVKILNNMVQL</sequence>
<reference key="1">
    <citation type="submission" date="2005-09" db="EMBL/GenBank/DDBJ databases">
        <title>Annotation of the Aspergillus terreus NIH2624 genome.</title>
        <authorList>
            <person name="Birren B.W."/>
            <person name="Lander E.S."/>
            <person name="Galagan J.E."/>
            <person name="Nusbaum C."/>
            <person name="Devon K."/>
            <person name="Henn M."/>
            <person name="Ma L.-J."/>
            <person name="Jaffe D.B."/>
            <person name="Butler J."/>
            <person name="Alvarez P."/>
            <person name="Gnerre S."/>
            <person name="Grabherr M."/>
            <person name="Kleber M."/>
            <person name="Mauceli E.W."/>
            <person name="Brockman W."/>
            <person name="Rounsley S."/>
            <person name="Young S.K."/>
            <person name="LaButti K."/>
            <person name="Pushparaj V."/>
            <person name="DeCaprio D."/>
            <person name="Crawford M."/>
            <person name="Koehrsen M."/>
            <person name="Engels R."/>
            <person name="Montgomery P."/>
            <person name="Pearson M."/>
            <person name="Howarth C."/>
            <person name="Larson L."/>
            <person name="Luoma S."/>
            <person name="White J."/>
            <person name="Alvarado L."/>
            <person name="Kodira C.D."/>
            <person name="Zeng Q."/>
            <person name="Oleary S."/>
            <person name="Yandava C."/>
            <person name="Denning D.W."/>
            <person name="Nierman W.C."/>
            <person name="Milne T."/>
            <person name="Madden K."/>
        </authorList>
    </citation>
    <scope>NUCLEOTIDE SEQUENCE [LARGE SCALE GENOMIC DNA]</scope>
    <source>
        <strain>NIH 2624 / FGSC A1156</strain>
    </source>
</reference>
<protein>
    <recommendedName>
        <fullName evidence="1">Fe-S cluster assembly protein dre2</fullName>
    </recommendedName>
    <alternativeName>
        <fullName evidence="1">Anamorsin homolog</fullName>
    </alternativeName>
</protein>
<accession>Q0C7M4</accession>
<dbReference type="EMBL" id="CH476610">
    <property type="protein sequence ID" value="EAU29307.1"/>
    <property type="molecule type" value="Genomic_DNA"/>
</dbReference>
<dbReference type="RefSeq" id="XP_001218658.1">
    <property type="nucleotide sequence ID" value="XM_001218657.1"/>
</dbReference>
<dbReference type="STRING" id="341663.Q0C7M4"/>
<dbReference type="EnsemblFungi" id="EAU29307">
    <property type="protein sequence ID" value="EAU29307"/>
    <property type="gene ID" value="ATEG_10310"/>
</dbReference>
<dbReference type="GeneID" id="4354590"/>
<dbReference type="VEuPathDB" id="FungiDB:ATEG_10310"/>
<dbReference type="eggNOG" id="KOG4020">
    <property type="taxonomic scope" value="Eukaryota"/>
</dbReference>
<dbReference type="HOGENOM" id="CLU_067152_1_0_1"/>
<dbReference type="OMA" id="DFVMPVT"/>
<dbReference type="OrthoDB" id="311633at2759"/>
<dbReference type="Proteomes" id="UP000007963">
    <property type="component" value="Unassembled WGS sequence"/>
</dbReference>
<dbReference type="GO" id="GO:0005758">
    <property type="term" value="C:mitochondrial intermembrane space"/>
    <property type="evidence" value="ECO:0007669"/>
    <property type="project" value="UniProtKB-SubCell"/>
</dbReference>
<dbReference type="GO" id="GO:0051537">
    <property type="term" value="F:2 iron, 2 sulfur cluster binding"/>
    <property type="evidence" value="ECO:0007669"/>
    <property type="project" value="UniProtKB-UniRule"/>
</dbReference>
<dbReference type="GO" id="GO:0051539">
    <property type="term" value="F:4 iron, 4 sulfur cluster binding"/>
    <property type="evidence" value="ECO:0007669"/>
    <property type="project" value="UniProtKB-KW"/>
</dbReference>
<dbReference type="GO" id="GO:0009055">
    <property type="term" value="F:electron transfer activity"/>
    <property type="evidence" value="ECO:0007669"/>
    <property type="project" value="UniProtKB-UniRule"/>
</dbReference>
<dbReference type="GO" id="GO:0046872">
    <property type="term" value="F:metal ion binding"/>
    <property type="evidence" value="ECO:0007669"/>
    <property type="project" value="UniProtKB-KW"/>
</dbReference>
<dbReference type="GO" id="GO:0016226">
    <property type="term" value="P:iron-sulfur cluster assembly"/>
    <property type="evidence" value="ECO:0007669"/>
    <property type="project" value="UniProtKB-UniRule"/>
</dbReference>
<dbReference type="Gene3D" id="3.40.50.11000">
    <property type="entry name" value="Fe-S cluster assembly protein Dre2, N-terminal domain"/>
    <property type="match status" value="1"/>
</dbReference>
<dbReference type="HAMAP" id="MF_03115">
    <property type="entry name" value="Anamorsin"/>
    <property type="match status" value="1"/>
</dbReference>
<dbReference type="InterPro" id="IPR007785">
    <property type="entry name" value="Anamorsin"/>
</dbReference>
<dbReference type="InterPro" id="IPR046408">
    <property type="entry name" value="CIAPIN1"/>
</dbReference>
<dbReference type="InterPro" id="IPR031838">
    <property type="entry name" value="Dre2_N"/>
</dbReference>
<dbReference type="PANTHER" id="PTHR13273">
    <property type="entry name" value="ANAMORSIN"/>
    <property type="match status" value="1"/>
</dbReference>
<dbReference type="PANTHER" id="PTHR13273:SF14">
    <property type="entry name" value="ANAMORSIN"/>
    <property type="match status" value="1"/>
</dbReference>
<dbReference type="Pfam" id="PF05093">
    <property type="entry name" value="CIAPIN1"/>
    <property type="match status" value="1"/>
</dbReference>
<dbReference type="Pfam" id="PF16803">
    <property type="entry name" value="DRE2_N"/>
    <property type="match status" value="1"/>
</dbReference>